<evidence type="ECO:0000250" key="1">
    <source>
        <dbReference type="UniProtKB" id="P0C2E9"/>
    </source>
</evidence>
<evidence type="ECO:0000250" key="2">
    <source>
        <dbReference type="UniProtKB" id="P13128"/>
    </source>
</evidence>
<evidence type="ECO:0000250" key="3">
    <source>
        <dbReference type="UniProtKB" id="Q04IN8"/>
    </source>
</evidence>
<evidence type="ECO:0000255" key="4"/>
<evidence type="ECO:0000256" key="5">
    <source>
        <dbReference type="SAM" id="MobiDB-lite"/>
    </source>
</evidence>
<evidence type="ECO:0000269" key="6">
    <source>
    </source>
</evidence>
<evidence type="ECO:0000303" key="7">
    <source>
    </source>
</evidence>
<evidence type="ECO:0000305" key="8"/>
<name>TACY_LISSE</name>
<dbReference type="EMBL" id="X60462">
    <property type="protein sequence ID" value="CAA42996.1"/>
    <property type="molecule type" value="Genomic_DNA"/>
</dbReference>
<dbReference type="PIR" id="S22340">
    <property type="entry name" value="S22340"/>
</dbReference>
<dbReference type="RefSeq" id="WP_012984716.1">
    <property type="nucleotide sequence ID" value="NZ_JBHLTD010000001.1"/>
</dbReference>
<dbReference type="SMR" id="P31830"/>
<dbReference type="STRING" id="683837.lse_0183"/>
<dbReference type="GeneID" id="32490189"/>
<dbReference type="eggNOG" id="ENOG502Z7ST">
    <property type="taxonomic scope" value="Bacteria"/>
</dbReference>
<dbReference type="OMA" id="THKTWDG"/>
<dbReference type="GO" id="GO:0005576">
    <property type="term" value="C:extracellular region"/>
    <property type="evidence" value="ECO:0007669"/>
    <property type="project" value="UniProtKB-SubCell"/>
</dbReference>
<dbReference type="GO" id="GO:0020002">
    <property type="term" value="C:host cell plasma membrane"/>
    <property type="evidence" value="ECO:0007669"/>
    <property type="project" value="UniProtKB-SubCell"/>
</dbReference>
<dbReference type="GO" id="GO:0016020">
    <property type="term" value="C:membrane"/>
    <property type="evidence" value="ECO:0007669"/>
    <property type="project" value="UniProtKB-KW"/>
</dbReference>
<dbReference type="GO" id="GO:0015485">
    <property type="term" value="F:cholesterol binding"/>
    <property type="evidence" value="ECO:0007669"/>
    <property type="project" value="InterPro"/>
</dbReference>
<dbReference type="GO" id="GO:0090729">
    <property type="term" value="F:toxin activity"/>
    <property type="evidence" value="ECO:0007669"/>
    <property type="project" value="UniProtKB-KW"/>
</dbReference>
<dbReference type="GO" id="GO:0031640">
    <property type="term" value="P:killing of cells of another organism"/>
    <property type="evidence" value="ECO:0007669"/>
    <property type="project" value="UniProtKB-KW"/>
</dbReference>
<dbReference type="Gene3D" id="3.30.1040.20">
    <property type="match status" value="1"/>
</dbReference>
<dbReference type="Gene3D" id="3.40.30.40">
    <property type="entry name" value="Perfringolysin"/>
    <property type="match status" value="1"/>
</dbReference>
<dbReference type="Gene3D" id="2.60.40.1430">
    <property type="entry name" value="Perfringolysin, domain 4"/>
    <property type="match status" value="1"/>
</dbReference>
<dbReference type="Gene3D" id="3.90.840.10">
    <property type="entry name" value="Thiol-activated cytolysin superfamily/Thiol-activated cytolysin, alpha-beta domain"/>
    <property type="match status" value="1"/>
</dbReference>
<dbReference type="InterPro" id="IPR035390">
    <property type="entry name" value="Thiol_cytolys_C"/>
</dbReference>
<dbReference type="InterPro" id="IPR038700">
    <property type="entry name" value="Thiol_cytolys_C_sf"/>
</dbReference>
<dbReference type="InterPro" id="IPR001869">
    <property type="entry name" value="Thiol_cytolysin"/>
</dbReference>
<dbReference type="InterPro" id="IPR036363">
    <property type="entry name" value="Thiol_cytolysin_ab_sf"/>
</dbReference>
<dbReference type="InterPro" id="IPR036359">
    <property type="entry name" value="Thiol_cytolysin_sf"/>
</dbReference>
<dbReference type="Pfam" id="PF17440">
    <property type="entry name" value="Thiol_cytolys_C"/>
    <property type="match status" value="1"/>
</dbReference>
<dbReference type="Pfam" id="PF01289">
    <property type="entry name" value="Thiol_cytolysin"/>
    <property type="match status" value="1"/>
</dbReference>
<dbReference type="PRINTS" id="PR01400">
    <property type="entry name" value="TACYTOLYSIN"/>
</dbReference>
<dbReference type="SUPFAM" id="SSF56978">
    <property type="entry name" value="Perfringolysin"/>
    <property type="match status" value="1"/>
</dbReference>
<dbReference type="PROSITE" id="PS00481">
    <property type="entry name" value="THIOL_CYTOLYSINS"/>
    <property type="match status" value="1"/>
</dbReference>
<proteinExistence type="evidence at protein level"/>
<sequence>MKIFGLVIMSLLFVSLPITQQPEARDVPAYDRSEVTISPAETPESPPATPKTPVEKKHAEEINKYIWGLNYDKNSILVYQGEAVTNVPPKKGYKDGSEYIVVEKKKKGINQNNADISVINAISSLTYPGALVKANRELVENQPNVLPVKRDSLTLSVDLPGMTKKDNKIFVKNPTKSNVNNAVNTLVERWNDKYSKAYPNINAKIDYSDEMAYSESQLIAKFGTAFKAVNNSLNVNFEAISDGKVQEEVISFKQIYYNINVNEPTSPSKFFGGSVTKEQLDALGVNAENPPAYISSVAYGRQVYVKLSSSSHSNKVKTAFEAAMSGKSVKGDVELTNIIKNSSFKAVIYGGSAKEEVEIIDGNLGELRDILKKGSTYDRENPGVPISYTTNFLKDNDLAVVKNNSEYIETTSKSYTDGKINIDHSGGYVAQFNISWDEVSYDENGNEIKVHKKWGENYKSKLAHFTSSIYLPGNARNINIYARECTGLFWEWWRTVIDDRNLPLVKNRNVSIWGTTLYPRHSNNVDNPIQ</sequence>
<gene>
    <name evidence="7" type="primary">lso</name>
</gene>
<protein>
    <recommendedName>
        <fullName evidence="7">Seeligeriolysin</fullName>
        <shortName>LSO</shortName>
    </recommendedName>
    <alternativeName>
        <fullName>Thiol-activated cytolysin</fullName>
    </alternativeName>
</protein>
<comment type="function">
    <text evidence="2 6">A cholesterol-dependent toxin that causes cytolysis by forming pores in cholesterol containing host membranes. L.seeligeri is non-pathogenic, perhaps in part because this protein is about 25% as toxic as listeriolysin O. Mutating a single residue in the undecapeptide increases toxicity 2-fold (PubMed:11583846). After binding to target membranes, the protein undergoes a major conformation change, leading to its insertion in the host membrane and formation of an oligomeric pore complex. Cholesterol is required for binding to host membranes, membrane insertion and pore formation; cholesterol binding is mediated by a Thr-Leu pair in the C-terminus. Can be reversibly inactivated by oxidation (By similarity).</text>
</comment>
<comment type="subunit">
    <text evidence="3">Homooligomeric pore complex of 35 to 50 subunits; when inserted in the host membrane.</text>
</comment>
<comment type="subcellular location">
    <subcellularLocation>
        <location evidence="2">Secreted</location>
    </subcellularLocation>
    <subcellularLocation>
        <location evidence="2">Host cell membrane</location>
        <topology evidence="3">Multi-pass membrane protein</topology>
    </subcellularLocation>
    <text evidence="3">Secreted as soluble protein that then inserts into the host membrane and forms pores formed by transmembrane beta-strands.</text>
</comment>
<comment type="similarity">
    <text evidence="8">Belongs to the cholesterol-dependent cytolysin family.</text>
</comment>
<reference key="1">
    <citation type="journal article" date="1992" name="Biochim. Biophys. Acta">
        <title>Listeriolysin genes: complete sequence of ilo from Listeria ivanovii and of lso from Listeria seeligeri.</title>
        <authorList>
            <person name="Haas A."/>
            <person name="Dumbsky M."/>
            <person name="Kreft J."/>
        </authorList>
    </citation>
    <scope>NUCLEOTIDE SEQUENCE [GENOMIC DNA]</scope>
    <source>
        <strain>SLCC</strain>
    </source>
</reference>
<reference key="2">
    <citation type="journal article" date="2001" name="FEMS Microbiol. Lett.">
        <title>Difference in cholesterol-binding and cytolytic activities between listeriolysin O and seeligeriolysin O: a possible role of alanine residue in tryptophan-rich undecapeptide.</title>
        <authorList>
            <person name="Ito Y."/>
            <person name="Kawamura I."/>
            <person name="Kohda C."/>
            <person name="Baba H."/>
            <person name="Kimoto T."/>
            <person name="Watanabe I."/>
            <person name="Nomura T."/>
            <person name="Mitsuyama M."/>
        </authorList>
    </citation>
    <scope>FUNCTION</scope>
    <scope>MUTAGENESIS OF PHE-489</scope>
    <source>
        <strain>ATCC 35967</strain>
    </source>
</reference>
<keyword id="KW-0204">Cytolysis</keyword>
<keyword id="KW-0354">Hemolysis</keyword>
<keyword id="KW-1032">Host cell membrane</keyword>
<keyword id="KW-1043">Host membrane</keyword>
<keyword id="KW-0446">Lipid-binding</keyword>
<keyword id="KW-0472">Membrane</keyword>
<keyword id="KW-0964">Secreted</keyword>
<keyword id="KW-0732">Signal</keyword>
<keyword id="KW-0800">Toxin</keyword>
<keyword id="KW-0812">Transmembrane</keyword>
<keyword id="KW-1134">Transmembrane beta strand</keyword>
<keyword id="KW-0843">Virulence</keyword>
<accession>P31830</accession>
<feature type="signal peptide" evidence="4">
    <location>
        <begin position="1"/>
        <end position="25"/>
    </location>
</feature>
<feature type="chain" id="PRO_0000034103" description="Seeligeriolysin">
    <location>
        <begin position="26"/>
        <end position="530"/>
    </location>
</feature>
<feature type="transmembrane region" description="Beta stranded" evidence="3">
    <location>
        <begin position="215"/>
        <end position="228"/>
    </location>
</feature>
<feature type="transmembrane region" description="Beta stranded" evidence="3">
    <location>
        <begin position="235"/>
        <end position="244"/>
    </location>
</feature>
<feature type="transmembrane region" description="Beta stranded" evidence="3">
    <location>
        <begin position="313"/>
        <end position="322"/>
    </location>
</feature>
<feature type="transmembrane region" description="Beta stranded" evidence="3">
    <location>
        <begin position="330"/>
        <end position="342"/>
    </location>
</feature>
<feature type="region of interest" description="Disordered" evidence="5">
    <location>
        <begin position="36"/>
        <end position="55"/>
    </location>
</feature>
<feature type="short sequence motif" description="Conserved undecapeptide" evidence="8">
    <location>
        <begin position="484"/>
        <end position="494"/>
    </location>
</feature>
<feature type="short sequence motif" description="Cholesterol binding" evidence="1">
    <location>
        <begin position="516"/>
        <end position="517"/>
    </location>
</feature>
<feature type="mutagenesis site" description="Doubles toxicity, increases cholesterol binding about 3.5-fold." evidence="6">
    <original>F</original>
    <variation>A</variation>
    <location>
        <position position="489"/>
    </location>
</feature>
<organism>
    <name type="scientific">Listeria seeligeri</name>
    <dbReference type="NCBI Taxonomy" id="1640"/>
    <lineage>
        <taxon>Bacteria</taxon>
        <taxon>Bacillati</taxon>
        <taxon>Bacillota</taxon>
        <taxon>Bacilli</taxon>
        <taxon>Bacillales</taxon>
        <taxon>Listeriaceae</taxon>
        <taxon>Listeria</taxon>
    </lineage>
</organism>